<feature type="chain" id="PRO_1000126513" description="Small ribosomal subunit protein bS20">
    <location>
        <begin position="1"/>
        <end position="88"/>
    </location>
</feature>
<feature type="region of interest" description="Disordered" evidence="2">
    <location>
        <begin position="1"/>
        <end position="27"/>
    </location>
</feature>
<comment type="function">
    <text evidence="1">Binds directly to 16S ribosomal RNA.</text>
</comment>
<comment type="similarity">
    <text evidence="1">Belongs to the bacterial ribosomal protein bS20 family.</text>
</comment>
<dbReference type="EMBL" id="CP000961">
    <property type="protein sequence ID" value="ACA85580.1"/>
    <property type="molecule type" value="Genomic_DNA"/>
</dbReference>
<dbReference type="RefSeq" id="WP_012323926.1">
    <property type="nucleotide sequence ID" value="NC_010506.1"/>
</dbReference>
<dbReference type="SMR" id="B1KIT2"/>
<dbReference type="STRING" id="392500.Swoo_1288"/>
<dbReference type="KEGG" id="swd:Swoo_1288"/>
<dbReference type="eggNOG" id="COG0268">
    <property type="taxonomic scope" value="Bacteria"/>
</dbReference>
<dbReference type="HOGENOM" id="CLU_160655_4_0_6"/>
<dbReference type="Proteomes" id="UP000002168">
    <property type="component" value="Chromosome"/>
</dbReference>
<dbReference type="GO" id="GO:0005829">
    <property type="term" value="C:cytosol"/>
    <property type="evidence" value="ECO:0007669"/>
    <property type="project" value="TreeGrafter"/>
</dbReference>
<dbReference type="GO" id="GO:0015935">
    <property type="term" value="C:small ribosomal subunit"/>
    <property type="evidence" value="ECO:0007669"/>
    <property type="project" value="TreeGrafter"/>
</dbReference>
<dbReference type="GO" id="GO:0070181">
    <property type="term" value="F:small ribosomal subunit rRNA binding"/>
    <property type="evidence" value="ECO:0007669"/>
    <property type="project" value="TreeGrafter"/>
</dbReference>
<dbReference type="GO" id="GO:0003735">
    <property type="term" value="F:structural constituent of ribosome"/>
    <property type="evidence" value="ECO:0007669"/>
    <property type="project" value="InterPro"/>
</dbReference>
<dbReference type="GO" id="GO:0006412">
    <property type="term" value="P:translation"/>
    <property type="evidence" value="ECO:0007669"/>
    <property type="project" value="UniProtKB-UniRule"/>
</dbReference>
<dbReference type="FunFam" id="1.20.58.110:FF:000001">
    <property type="entry name" value="30S ribosomal protein S20"/>
    <property type="match status" value="1"/>
</dbReference>
<dbReference type="Gene3D" id="1.20.58.110">
    <property type="entry name" value="Ribosomal protein S20"/>
    <property type="match status" value="1"/>
</dbReference>
<dbReference type="HAMAP" id="MF_00500">
    <property type="entry name" value="Ribosomal_bS20"/>
    <property type="match status" value="1"/>
</dbReference>
<dbReference type="InterPro" id="IPR002583">
    <property type="entry name" value="Ribosomal_bS20"/>
</dbReference>
<dbReference type="InterPro" id="IPR036510">
    <property type="entry name" value="Ribosomal_bS20_sf"/>
</dbReference>
<dbReference type="NCBIfam" id="TIGR00029">
    <property type="entry name" value="S20"/>
    <property type="match status" value="1"/>
</dbReference>
<dbReference type="PANTHER" id="PTHR33398">
    <property type="entry name" value="30S RIBOSOMAL PROTEIN S20"/>
    <property type="match status" value="1"/>
</dbReference>
<dbReference type="PANTHER" id="PTHR33398:SF1">
    <property type="entry name" value="SMALL RIBOSOMAL SUBUNIT PROTEIN BS20C"/>
    <property type="match status" value="1"/>
</dbReference>
<dbReference type="Pfam" id="PF01649">
    <property type="entry name" value="Ribosomal_S20p"/>
    <property type="match status" value="1"/>
</dbReference>
<dbReference type="SUPFAM" id="SSF46992">
    <property type="entry name" value="Ribosomal protein S20"/>
    <property type="match status" value="1"/>
</dbReference>
<keyword id="KW-1185">Reference proteome</keyword>
<keyword id="KW-0687">Ribonucleoprotein</keyword>
<keyword id="KW-0689">Ribosomal protein</keyword>
<keyword id="KW-0694">RNA-binding</keyword>
<keyword id="KW-0699">rRNA-binding</keyword>
<organism>
    <name type="scientific">Shewanella woodyi (strain ATCC 51908 / MS32)</name>
    <dbReference type="NCBI Taxonomy" id="392500"/>
    <lineage>
        <taxon>Bacteria</taxon>
        <taxon>Pseudomonadati</taxon>
        <taxon>Pseudomonadota</taxon>
        <taxon>Gammaproteobacteria</taxon>
        <taxon>Alteromonadales</taxon>
        <taxon>Shewanellaceae</taxon>
        <taxon>Shewanella</taxon>
    </lineage>
</organism>
<protein>
    <recommendedName>
        <fullName evidence="1">Small ribosomal subunit protein bS20</fullName>
    </recommendedName>
    <alternativeName>
        <fullName evidence="3">30S ribosomal protein S20</fullName>
    </alternativeName>
</protein>
<name>RS20_SHEWM</name>
<proteinExistence type="inferred from homology"/>
<reference key="1">
    <citation type="submission" date="2008-02" db="EMBL/GenBank/DDBJ databases">
        <title>Complete sequence of Shewanella woodyi ATCC 51908.</title>
        <authorList>
            <consortium name="US DOE Joint Genome Institute"/>
            <person name="Copeland A."/>
            <person name="Lucas S."/>
            <person name="Lapidus A."/>
            <person name="Glavina del Rio T."/>
            <person name="Dalin E."/>
            <person name="Tice H."/>
            <person name="Bruce D."/>
            <person name="Goodwin L."/>
            <person name="Pitluck S."/>
            <person name="Sims D."/>
            <person name="Brettin T."/>
            <person name="Detter J.C."/>
            <person name="Han C."/>
            <person name="Kuske C.R."/>
            <person name="Schmutz J."/>
            <person name="Larimer F."/>
            <person name="Land M."/>
            <person name="Hauser L."/>
            <person name="Kyrpides N."/>
            <person name="Lykidis A."/>
            <person name="Zhao J.-S."/>
            <person name="Richardson P."/>
        </authorList>
    </citation>
    <scope>NUCLEOTIDE SEQUENCE [LARGE SCALE GENOMIC DNA]</scope>
    <source>
        <strain>ATCC 51908 / MS32</strain>
    </source>
</reference>
<gene>
    <name evidence="1" type="primary">rpsT</name>
    <name type="ordered locus">Swoo_1288</name>
</gene>
<evidence type="ECO:0000255" key="1">
    <source>
        <dbReference type="HAMAP-Rule" id="MF_00500"/>
    </source>
</evidence>
<evidence type="ECO:0000256" key="2">
    <source>
        <dbReference type="SAM" id="MobiDB-lite"/>
    </source>
</evidence>
<evidence type="ECO:0000305" key="3"/>
<accession>B1KIT2</accession>
<sequence length="88" mass="9715">MANSKSAKKRALQSEKRRQHNASRRSMLRSYVKKVIAAIQAGDHAAATEAFNAAQPILDRMATKGLIHKNKAARHKARLNTRIKALAA</sequence>